<evidence type="ECO:0000255" key="1">
    <source>
        <dbReference type="HAMAP-Rule" id="MF_00607"/>
    </source>
</evidence>
<organism>
    <name type="scientific">Lawsonia intracellularis (strain PHE/MN1-00)</name>
    <dbReference type="NCBI Taxonomy" id="363253"/>
    <lineage>
        <taxon>Bacteria</taxon>
        <taxon>Pseudomonadati</taxon>
        <taxon>Thermodesulfobacteriota</taxon>
        <taxon>Desulfovibrionia</taxon>
        <taxon>Desulfovibrionales</taxon>
        <taxon>Desulfovibrionaceae</taxon>
        <taxon>Lawsonia</taxon>
    </lineage>
</organism>
<proteinExistence type="inferred from homology"/>
<reference key="1">
    <citation type="submission" date="2005-11" db="EMBL/GenBank/DDBJ databases">
        <title>The complete genome sequence of Lawsonia intracellularis: the causative agent of proliferative enteropathy.</title>
        <authorList>
            <person name="Kaur K."/>
            <person name="Zhang Q."/>
            <person name="Beckler D."/>
            <person name="Munir S."/>
            <person name="Li L."/>
            <person name="Kinsley K."/>
            <person name="Herron L."/>
            <person name="Peterson A."/>
            <person name="May B."/>
            <person name="Singh S."/>
            <person name="Gebhart C."/>
            <person name="Kapur V."/>
        </authorList>
    </citation>
    <scope>NUCLEOTIDE SEQUENCE [LARGE SCALE GENOMIC DNA]</scope>
    <source>
        <strain>PHE/MN1-00</strain>
    </source>
</reference>
<protein>
    <recommendedName>
        <fullName evidence="1">Ribosomal RNA small subunit methyltransferase A</fullName>
        <ecNumber evidence="1">2.1.1.182</ecNumber>
    </recommendedName>
    <alternativeName>
        <fullName evidence="1">16S rRNA (adenine(1518)-N(6)/adenine(1519)-N(6))-dimethyltransferase</fullName>
    </alternativeName>
    <alternativeName>
        <fullName evidence="1">16S rRNA dimethyladenosine transferase</fullName>
    </alternativeName>
    <alternativeName>
        <fullName evidence="1">16S rRNA dimethylase</fullName>
    </alternativeName>
    <alternativeName>
        <fullName evidence="1">S-adenosylmethionine-6-N', N'-adenosyl(rRNA) dimethyltransferase</fullName>
    </alternativeName>
</protein>
<accession>Q1MR01</accession>
<dbReference type="EC" id="2.1.1.182" evidence="1"/>
<dbReference type="EMBL" id="AM180252">
    <property type="protein sequence ID" value="CAJ54575.1"/>
    <property type="molecule type" value="Genomic_DNA"/>
</dbReference>
<dbReference type="RefSeq" id="WP_011526605.1">
    <property type="nucleotide sequence ID" value="NC_008011.1"/>
</dbReference>
<dbReference type="SMR" id="Q1MR01"/>
<dbReference type="STRING" id="363253.LI0521"/>
<dbReference type="KEGG" id="lip:LI0521"/>
<dbReference type="eggNOG" id="COG0030">
    <property type="taxonomic scope" value="Bacteria"/>
</dbReference>
<dbReference type="HOGENOM" id="CLU_041220_0_1_7"/>
<dbReference type="OrthoDB" id="9814755at2"/>
<dbReference type="Proteomes" id="UP000002430">
    <property type="component" value="Chromosome"/>
</dbReference>
<dbReference type="GO" id="GO:0005829">
    <property type="term" value="C:cytosol"/>
    <property type="evidence" value="ECO:0007669"/>
    <property type="project" value="TreeGrafter"/>
</dbReference>
<dbReference type="GO" id="GO:0052908">
    <property type="term" value="F:16S rRNA (adenine(1518)-N(6)/adenine(1519)-N(6))-dimethyltransferase activity"/>
    <property type="evidence" value="ECO:0007669"/>
    <property type="project" value="UniProtKB-EC"/>
</dbReference>
<dbReference type="GO" id="GO:0003723">
    <property type="term" value="F:RNA binding"/>
    <property type="evidence" value="ECO:0007669"/>
    <property type="project" value="UniProtKB-KW"/>
</dbReference>
<dbReference type="Gene3D" id="1.10.8.100">
    <property type="entry name" value="Ribosomal RNA adenine dimethylase-like, domain 2"/>
    <property type="match status" value="1"/>
</dbReference>
<dbReference type="Gene3D" id="3.40.50.150">
    <property type="entry name" value="Vaccinia Virus protein VP39"/>
    <property type="match status" value="1"/>
</dbReference>
<dbReference type="HAMAP" id="MF_00607">
    <property type="entry name" value="16SrRNA_methyltr_A"/>
    <property type="match status" value="1"/>
</dbReference>
<dbReference type="InterPro" id="IPR001737">
    <property type="entry name" value="KsgA/Erm"/>
</dbReference>
<dbReference type="InterPro" id="IPR023165">
    <property type="entry name" value="rRNA_Ade_diMease-like_C"/>
</dbReference>
<dbReference type="InterPro" id="IPR020596">
    <property type="entry name" value="rRNA_Ade_Mease_Trfase_CS"/>
</dbReference>
<dbReference type="InterPro" id="IPR020598">
    <property type="entry name" value="rRNA_Ade_methylase_Trfase_N"/>
</dbReference>
<dbReference type="InterPro" id="IPR011530">
    <property type="entry name" value="rRNA_adenine_dimethylase"/>
</dbReference>
<dbReference type="InterPro" id="IPR029063">
    <property type="entry name" value="SAM-dependent_MTases_sf"/>
</dbReference>
<dbReference type="NCBIfam" id="TIGR00755">
    <property type="entry name" value="ksgA"/>
    <property type="match status" value="1"/>
</dbReference>
<dbReference type="PANTHER" id="PTHR11727">
    <property type="entry name" value="DIMETHYLADENOSINE TRANSFERASE"/>
    <property type="match status" value="1"/>
</dbReference>
<dbReference type="PANTHER" id="PTHR11727:SF7">
    <property type="entry name" value="DIMETHYLADENOSINE TRANSFERASE-RELATED"/>
    <property type="match status" value="1"/>
</dbReference>
<dbReference type="Pfam" id="PF00398">
    <property type="entry name" value="RrnaAD"/>
    <property type="match status" value="1"/>
</dbReference>
<dbReference type="SMART" id="SM00650">
    <property type="entry name" value="rADc"/>
    <property type="match status" value="1"/>
</dbReference>
<dbReference type="SUPFAM" id="SSF53335">
    <property type="entry name" value="S-adenosyl-L-methionine-dependent methyltransferases"/>
    <property type="match status" value="1"/>
</dbReference>
<dbReference type="PROSITE" id="PS01131">
    <property type="entry name" value="RRNA_A_DIMETH"/>
    <property type="match status" value="1"/>
</dbReference>
<dbReference type="PROSITE" id="PS51689">
    <property type="entry name" value="SAM_RNA_A_N6_MT"/>
    <property type="match status" value="1"/>
</dbReference>
<feature type="chain" id="PRO_0000257300" description="Ribosomal RNA small subunit methyltransferase A">
    <location>
        <begin position="1"/>
        <end position="271"/>
    </location>
</feature>
<feature type="binding site" evidence="1">
    <location>
        <position position="14"/>
    </location>
    <ligand>
        <name>S-adenosyl-L-methionine</name>
        <dbReference type="ChEBI" id="CHEBI:59789"/>
    </ligand>
</feature>
<feature type="binding site" evidence="1">
    <location>
        <position position="16"/>
    </location>
    <ligand>
        <name>S-adenosyl-L-methionine</name>
        <dbReference type="ChEBI" id="CHEBI:59789"/>
    </ligand>
</feature>
<feature type="binding site" evidence="1">
    <location>
        <position position="41"/>
    </location>
    <ligand>
        <name>S-adenosyl-L-methionine</name>
        <dbReference type="ChEBI" id="CHEBI:59789"/>
    </ligand>
</feature>
<feature type="binding site" evidence="1">
    <location>
        <position position="63"/>
    </location>
    <ligand>
        <name>S-adenosyl-L-methionine</name>
        <dbReference type="ChEBI" id="CHEBI:59789"/>
    </ligand>
</feature>
<feature type="binding site" evidence="1">
    <location>
        <position position="89"/>
    </location>
    <ligand>
        <name>S-adenosyl-L-methionine</name>
        <dbReference type="ChEBI" id="CHEBI:59789"/>
    </ligand>
</feature>
<feature type="binding site" evidence="1">
    <location>
        <position position="107"/>
    </location>
    <ligand>
        <name>S-adenosyl-L-methionine</name>
        <dbReference type="ChEBI" id="CHEBI:59789"/>
    </ligand>
</feature>
<name>RSMA_LAWIP</name>
<comment type="function">
    <text evidence="1">Specifically dimethylates two adjacent adenosines (A1518 and A1519) in the loop of a conserved hairpin near the 3'-end of 16S rRNA in the 30S particle. May play a critical role in biogenesis of 30S subunits.</text>
</comment>
<comment type="catalytic activity">
    <reaction evidence="1">
        <text>adenosine(1518)/adenosine(1519) in 16S rRNA + 4 S-adenosyl-L-methionine = N(6)-dimethyladenosine(1518)/N(6)-dimethyladenosine(1519) in 16S rRNA + 4 S-adenosyl-L-homocysteine + 4 H(+)</text>
        <dbReference type="Rhea" id="RHEA:19609"/>
        <dbReference type="Rhea" id="RHEA-COMP:10232"/>
        <dbReference type="Rhea" id="RHEA-COMP:10233"/>
        <dbReference type="ChEBI" id="CHEBI:15378"/>
        <dbReference type="ChEBI" id="CHEBI:57856"/>
        <dbReference type="ChEBI" id="CHEBI:59789"/>
        <dbReference type="ChEBI" id="CHEBI:74411"/>
        <dbReference type="ChEBI" id="CHEBI:74493"/>
        <dbReference type="EC" id="2.1.1.182"/>
    </reaction>
</comment>
<comment type="subcellular location">
    <subcellularLocation>
        <location evidence="1">Cytoplasm</location>
    </subcellularLocation>
</comment>
<comment type="similarity">
    <text evidence="1">Belongs to the class I-like SAM-binding methyltransferase superfamily. rRNA adenine N(6)-methyltransferase family. RsmA subfamily.</text>
</comment>
<keyword id="KW-0963">Cytoplasm</keyword>
<keyword id="KW-0489">Methyltransferase</keyword>
<keyword id="KW-1185">Reference proteome</keyword>
<keyword id="KW-0694">RNA-binding</keyword>
<keyword id="KW-0698">rRNA processing</keyword>
<keyword id="KW-0949">S-adenosyl-L-methionine</keyword>
<keyword id="KW-0808">Transferase</keyword>
<gene>
    <name evidence="1" type="primary">rsmA</name>
    <name evidence="1" type="synonym">ksgA</name>
    <name type="ordered locus">LI0521</name>
</gene>
<sequence length="271" mass="31210">MDQTFRPKKSLGQHFLKDTAIAYRIVKLLDIHEGENIFEIGPGQGALTRHIYGYNPGQLLLVEKDSCWVDYHSSVKQQNVSKVTIHHLDALKFSWETLCGSWKVISNLPYNVGSALIWDIVSRVQSMSRAVFMVQKEVADRLCACPGTKSYGVLSVWVQSFAKVEWGFIVKPHSFYPQPKVDSAIVTLYPKPREEQPKNSKTFAWIIKQCFQHRRKQMQSILRKIGFLNYYESLERIGISPSARPESLSNQLFQQLSQEFLLQLIDFPKKT</sequence>